<feature type="chain" id="PRO_0000185415" description="Omega-3 fatty acid desaturase, endoplasmic reticulum">
    <location>
        <begin position="1"/>
        <end position="379"/>
    </location>
</feature>
<feature type="transmembrane region" description="Helical" evidence="1">
    <location>
        <begin position="52"/>
        <end position="72"/>
    </location>
</feature>
<feature type="transmembrane region" description="Helical" evidence="1">
    <location>
        <begin position="213"/>
        <end position="233"/>
    </location>
</feature>
<feature type="transmembrane region" description="Helical" evidence="1">
    <location>
        <begin position="236"/>
        <end position="256"/>
    </location>
</feature>
<feature type="short sequence motif" description="Histidine box-1">
    <location>
        <begin position="97"/>
        <end position="101"/>
    </location>
</feature>
<feature type="short sequence motif" description="Histidine box-2">
    <location>
        <begin position="133"/>
        <end position="137"/>
    </location>
</feature>
<feature type="short sequence motif" description="Histidine box-3">
    <location>
        <begin position="300"/>
        <end position="304"/>
    </location>
</feature>
<comment type="function">
    <text>ER (microsomal) omega-3 fatty acid desaturase introduces the third double bond in the biosynthesis of 18:3 fatty acids, important constituents of plant membranes. It is thought to use cytochrome b5 as an electron donor and to act on fatty acids esterified to phosphatidylcholine and, possibly, other phospholipids.</text>
</comment>
<comment type="pathway">
    <text>Lipid metabolism; polyunsaturated fatty acid biosynthesis.</text>
</comment>
<comment type="subcellular location">
    <subcellularLocation>
        <location>Endoplasmic reticulum membrane</location>
        <topology>Multi-pass membrane protein</topology>
    </subcellularLocation>
</comment>
<comment type="domain">
    <text>The histidine box domains may contain the active site and/or be involved in metal ion binding.</text>
</comment>
<comment type="similarity">
    <text evidence="2">Belongs to the fatty acid desaturase type 1 family.</text>
</comment>
<accession>P48626</accession>
<sequence length="379" mass="44149">MGSLGISEIYDKNSFNEMEFEFDPSAPPPFRLAEIRNVIPKHCWVKDPLRSLSYVVRDVIFVATLIGIAIHLDSWLFYPLYWAIQGTMFWAIFVLGHDCGHGSFSDSQLLNNVVGHILHSAILVPYHGWRISHKTHHQNHGNVETDESWVPMPEKLYNKVGYSTKFLRYKIPFPLLAYPMYLMKRSPGKSGSHFNPYSDLFQPHERKYVVTSTLCWTVMAALLLYLCTAFGSLQMFKIYGAPYLIFVMWLDFVTYLHHHGYEKKLPWYRGKEWSYLRGGLTTVDRDYGLFNNIHHDIGTHVIHHLFPQIPHYHLREATKAAKPVLGKYYREPKKSGPIPFHLVKDLTRSMKQDHYVSDSGEIVFYQTDPHIFRSAPKDE</sequence>
<reference key="1">
    <citation type="journal article" date="1994" name="Gene">
        <title>Cloning of a cDNA encoding tobacco omega-3 fatty acid desaturase.</title>
        <authorList>
            <person name="Hamada T."/>
            <person name="Kodama H."/>
            <person name="Nishimura M."/>
            <person name="Iba K."/>
        </authorList>
    </citation>
    <scope>NUCLEOTIDE SEQUENCE [MRNA]</scope>
    <source>
        <strain>cv. SR1</strain>
        <tissue>Leaf</tissue>
    </source>
</reference>
<evidence type="ECO:0000255" key="1"/>
<evidence type="ECO:0000305" key="2"/>
<organism>
    <name type="scientific">Nicotiana tabacum</name>
    <name type="common">Common tobacco</name>
    <dbReference type="NCBI Taxonomy" id="4097"/>
    <lineage>
        <taxon>Eukaryota</taxon>
        <taxon>Viridiplantae</taxon>
        <taxon>Streptophyta</taxon>
        <taxon>Embryophyta</taxon>
        <taxon>Tracheophyta</taxon>
        <taxon>Spermatophyta</taxon>
        <taxon>Magnoliopsida</taxon>
        <taxon>eudicotyledons</taxon>
        <taxon>Gunneridae</taxon>
        <taxon>Pentapetalae</taxon>
        <taxon>asterids</taxon>
        <taxon>lamiids</taxon>
        <taxon>Solanales</taxon>
        <taxon>Solanaceae</taxon>
        <taxon>Nicotianoideae</taxon>
        <taxon>Nicotianeae</taxon>
        <taxon>Nicotiana</taxon>
    </lineage>
</organism>
<proteinExistence type="evidence at transcript level"/>
<protein>
    <recommendedName>
        <fullName>Omega-3 fatty acid desaturase, endoplasmic reticulum</fullName>
        <ecNumber>1.14.19.-</ecNumber>
    </recommendedName>
</protein>
<keyword id="KW-0256">Endoplasmic reticulum</keyword>
<keyword id="KW-0275">Fatty acid biosynthesis</keyword>
<keyword id="KW-0276">Fatty acid metabolism</keyword>
<keyword id="KW-0444">Lipid biosynthesis</keyword>
<keyword id="KW-0443">Lipid metabolism</keyword>
<keyword id="KW-0472">Membrane</keyword>
<keyword id="KW-0560">Oxidoreductase</keyword>
<keyword id="KW-1185">Reference proteome</keyword>
<keyword id="KW-0812">Transmembrane</keyword>
<keyword id="KW-1133">Transmembrane helix</keyword>
<gene>
    <name type="primary">FAD3</name>
</gene>
<name>FAD3E_TOBAC</name>
<dbReference type="EC" id="1.14.19.-"/>
<dbReference type="EMBL" id="D26509">
    <property type="protein sequence ID" value="BAA05515.1"/>
    <property type="molecule type" value="mRNA"/>
</dbReference>
<dbReference type="PIR" id="JC2555">
    <property type="entry name" value="JC2555"/>
</dbReference>
<dbReference type="RefSeq" id="NP_001311727.1">
    <property type="nucleotide sequence ID" value="NM_001324798.1"/>
</dbReference>
<dbReference type="SMR" id="P48626"/>
<dbReference type="STRING" id="4097.P48626"/>
<dbReference type="PaxDb" id="4097-P48626"/>
<dbReference type="GeneID" id="107763446"/>
<dbReference type="KEGG" id="nta:107763446"/>
<dbReference type="OMA" id="IQHTFED"/>
<dbReference type="OrthoDB" id="1461976at2759"/>
<dbReference type="PhylomeDB" id="P48626"/>
<dbReference type="BRENDA" id="1.14.19.25">
    <property type="organism ID" value="3645"/>
</dbReference>
<dbReference type="UniPathway" id="UPA00658"/>
<dbReference type="Proteomes" id="UP000084051">
    <property type="component" value="Unplaced"/>
</dbReference>
<dbReference type="GO" id="GO:0005789">
    <property type="term" value="C:endoplasmic reticulum membrane"/>
    <property type="evidence" value="ECO:0007669"/>
    <property type="project" value="UniProtKB-SubCell"/>
</dbReference>
<dbReference type="GO" id="GO:0042389">
    <property type="term" value="F:omega-3 fatty acid desaturase activity"/>
    <property type="evidence" value="ECO:0000318"/>
    <property type="project" value="GO_Central"/>
</dbReference>
<dbReference type="GO" id="GO:0016717">
    <property type="term" value="F:oxidoreductase activity, acting on paired donors, with oxidation of a pair of donors resulting in the reduction of molecular oxygen to two molecules of water"/>
    <property type="evidence" value="ECO:0007669"/>
    <property type="project" value="InterPro"/>
</dbReference>
<dbReference type="GO" id="GO:0006636">
    <property type="term" value="P:unsaturated fatty acid biosynthetic process"/>
    <property type="evidence" value="ECO:0000318"/>
    <property type="project" value="GO_Central"/>
</dbReference>
<dbReference type="CDD" id="cd03507">
    <property type="entry name" value="Delta12-FADS-like"/>
    <property type="match status" value="1"/>
</dbReference>
<dbReference type="InterPro" id="IPR005804">
    <property type="entry name" value="FA_desaturase_dom"/>
</dbReference>
<dbReference type="InterPro" id="IPR021863">
    <property type="entry name" value="FAS_N"/>
</dbReference>
<dbReference type="InterPro" id="IPR012171">
    <property type="entry name" value="Fatty_acid_desaturase"/>
</dbReference>
<dbReference type="PANTHER" id="PTHR32100">
    <property type="entry name" value="OMEGA-6 FATTY ACID DESATURASE, CHLOROPLASTIC"/>
    <property type="match status" value="1"/>
</dbReference>
<dbReference type="Pfam" id="PF11960">
    <property type="entry name" value="DUF3474"/>
    <property type="match status" value="1"/>
</dbReference>
<dbReference type="Pfam" id="PF00487">
    <property type="entry name" value="FA_desaturase"/>
    <property type="match status" value="1"/>
</dbReference>